<organism>
    <name type="scientific">Saccharomyces cerevisiae (strain AWRI1631)</name>
    <name type="common">Baker's yeast</name>
    <dbReference type="NCBI Taxonomy" id="545124"/>
    <lineage>
        <taxon>Eukaryota</taxon>
        <taxon>Fungi</taxon>
        <taxon>Dikarya</taxon>
        <taxon>Ascomycota</taxon>
        <taxon>Saccharomycotina</taxon>
        <taxon>Saccharomycetes</taxon>
        <taxon>Saccharomycetales</taxon>
        <taxon>Saccharomycetaceae</taxon>
        <taxon>Saccharomyces</taxon>
    </lineage>
</organism>
<feature type="signal peptide" evidence="3">
    <location>
        <begin position="1"/>
        <end position="19"/>
    </location>
</feature>
<feature type="chain" id="PRO_0000392092" description="Cell wall protein ECM33">
    <location>
        <begin position="20"/>
        <end position="406"/>
    </location>
</feature>
<feature type="propeptide" id="PRO_0000392093" description="Removed in mature form" evidence="3">
    <location>
        <begin position="407"/>
        <end position="429"/>
    </location>
</feature>
<feature type="region of interest" description="Disordered" evidence="4">
    <location>
        <begin position="361"/>
        <end position="410"/>
    </location>
</feature>
<feature type="compositionally biased region" description="Low complexity" evidence="4">
    <location>
        <begin position="361"/>
        <end position="401"/>
    </location>
</feature>
<feature type="modified residue" description="Phosphoserine" evidence="2">
    <location>
        <position position="339"/>
    </location>
</feature>
<feature type="lipid moiety-binding region" description="GPI-anchor amidated glycine" evidence="3">
    <location>
        <position position="406"/>
    </location>
</feature>
<feature type="glycosylation site" description="N-linked (GlcNAc...) asparagine" evidence="3">
    <location>
        <position position="21"/>
    </location>
</feature>
<feature type="glycosylation site" description="N-linked (GlcNAc...) asparagine" evidence="3">
    <location>
        <position position="56"/>
    </location>
</feature>
<feature type="glycosylation site" description="N-linked (GlcNAc...) asparagine" evidence="3">
    <location>
        <position position="82"/>
    </location>
</feature>
<feature type="glycosylation site" description="N-linked (GlcNAc...) asparagine" evidence="3">
    <location>
        <position position="196"/>
    </location>
</feature>
<feature type="glycosylation site" description="N-linked (GlcNAc...) asparagine" evidence="3">
    <location>
        <position position="209"/>
    </location>
</feature>
<feature type="glycosylation site" description="N-linked (GlcNAc...) asparagine" evidence="3">
    <location>
        <position position="227"/>
    </location>
</feature>
<feature type="glycosylation site" description="N-linked (GlcNAc...) asparagine" evidence="3">
    <location>
        <position position="234"/>
    </location>
</feature>
<feature type="glycosylation site" description="N-linked (GlcNAc...) asparagine" evidence="3">
    <location>
        <position position="241"/>
    </location>
</feature>
<feature type="glycosylation site" description="N-linked (GlcNAc...) asparagine" evidence="3">
    <location>
        <position position="267"/>
    </location>
</feature>
<feature type="glycosylation site" description="N-linked (GlcNAc...) asparagine" evidence="3">
    <location>
        <position position="279"/>
    </location>
</feature>
<feature type="glycosylation site" description="N-linked (GlcNAc...) asparagine" evidence="3">
    <location>
        <position position="304"/>
    </location>
</feature>
<feature type="glycosylation site" description="N-linked (GlcNAc...) asparagine" evidence="3">
    <location>
        <position position="328"/>
    </location>
</feature>
<feature type="glycosylation site" description="N-linked (GlcNAc...) asparagine" evidence="3">
    <location>
        <position position="389"/>
    </location>
</feature>
<name>ECM33_YEAS6</name>
<gene>
    <name type="primary">ECM33</name>
    <name type="ORF">AWRI1631_21650</name>
</gene>
<accession>B5VE42</accession>
<keyword id="KW-1003">Cell membrane</keyword>
<keyword id="KW-0134">Cell wall</keyword>
<keyword id="KW-0961">Cell wall biogenesis/degradation</keyword>
<keyword id="KW-0325">Glycoprotein</keyword>
<keyword id="KW-0336">GPI-anchor</keyword>
<keyword id="KW-0449">Lipoprotein</keyword>
<keyword id="KW-0472">Membrane</keyword>
<keyword id="KW-0597">Phosphoprotein</keyword>
<keyword id="KW-0964">Secreted</keyword>
<keyword id="KW-0732">Signal</keyword>
<comment type="function">
    <text evidence="1">Required for proper cell wall integrity and for the correct assembly of the mannoprotein outer layer of the cell wall. Important for apical bud growth (By similarity).</text>
</comment>
<comment type="subcellular location">
    <subcellularLocation>
        <location evidence="1">Cell membrane</location>
        <topology evidence="1">Lipid-anchor</topology>
        <topology evidence="1">GPI-anchor</topology>
    </subcellularLocation>
    <subcellularLocation>
        <location evidence="1">Secreted</location>
        <location evidence="1">Cell wall</location>
    </subcellularLocation>
    <text evidence="1">Identified as GPI-anchored plasma membrane protein (GPI-PMP) as well as covalently-linked GPI-modified cell wall protein (GPI-CWP) in the outer cell wall layer.</text>
</comment>
<comment type="PTM">
    <text evidence="1">The GPI-anchor is attached to the protein in the endoplasmic reticulum and serves to target the protein to the cell surface. There, the glucosamine-inositol phospholipid moiety is cleaved off and the GPI-modified mannoprotein is covalently attached via its lipidless GPI glycan remnant to the 1,6-beta-glucan of the outer cell wall layer (By similarity).</text>
</comment>
<comment type="similarity">
    <text evidence="5">Belongs to the SPS2 family.</text>
</comment>
<comment type="sequence caution" evidence="5">
    <conflict type="erroneous gene model prediction">
        <sequence resource="EMBL-CDS" id="EDZ73806"/>
    </conflict>
</comment>
<dbReference type="EMBL" id="ABSV01000113">
    <property type="protein sequence ID" value="EDZ73806.1"/>
    <property type="status" value="ALT_SEQ"/>
    <property type="molecule type" value="Genomic_DNA"/>
</dbReference>
<dbReference type="SMR" id="B5VE42"/>
<dbReference type="GlyCosmos" id="B5VE42">
    <property type="glycosylation" value="13 sites, No reported glycans"/>
</dbReference>
<dbReference type="OrthoDB" id="37283at4893"/>
<dbReference type="Proteomes" id="UP000008988">
    <property type="component" value="Unassembled WGS sequence"/>
</dbReference>
<dbReference type="GO" id="GO:0005576">
    <property type="term" value="C:extracellular region"/>
    <property type="evidence" value="ECO:0007669"/>
    <property type="project" value="UniProtKB-KW"/>
</dbReference>
<dbReference type="GO" id="GO:0005886">
    <property type="term" value="C:plasma membrane"/>
    <property type="evidence" value="ECO:0007669"/>
    <property type="project" value="UniProtKB-SubCell"/>
</dbReference>
<dbReference type="GO" id="GO:0098552">
    <property type="term" value="C:side of membrane"/>
    <property type="evidence" value="ECO:0007669"/>
    <property type="project" value="UniProtKB-KW"/>
</dbReference>
<dbReference type="GO" id="GO:0071555">
    <property type="term" value="P:cell wall organization"/>
    <property type="evidence" value="ECO:0007669"/>
    <property type="project" value="UniProtKB-KW"/>
</dbReference>
<dbReference type="FunFam" id="3.80.20.20:FF:000016">
    <property type="entry name" value="Cell wall protein ECM33"/>
    <property type="match status" value="1"/>
</dbReference>
<dbReference type="Gene3D" id="3.80.20.20">
    <property type="entry name" value="Receptor L-domain"/>
    <property type="match status" value="1"/>
</dbReference>
<dbReference type="InterPro" id="IPR051648">
    <property type="entry name" value="CWI-Assembly_Regulator"/>
</dbReference>
<dbReference type="InterPro" id="IPR036941">
    <property type="entry name" value="Rcpt_L-dom_sf"/>
</dbReference>
<dbReference type="PANTHER" id="PTHR31018:SF3">
    <property type="entry name" value="RECEPTOR PROTEIN-TYROSINE KINASE"/>
    <property type="match status" value="1"/>
</dbReference>
<dbReference type="PANTHER" id="PTHR31018">
    <property type="entry name" value="SPORULATION-SPECIFIC PROTEIN-RELATED"/>
    <property type="match status" value="1"/>
</dbReference>
<dbReference type="SUPFAM" id="SSF52058">
    <property type="entry name" value="L domain-like"/>
    <property type="match status" value="2"/>
</dbReference>
<protein>
    <recommendedName>
        <fullName>Cell wall protein ECM33</fullName>
    </recommendedName>
    <alternativeName>
        <fullName>Extracellular mutant protein 33</fullName>
    </alternativeName>
</protein>
<reference key="1">
    <citation type="journal article" date="2008" name="FEMS Yeast Res.">
        <title>Comparative genome analysis of a Saccharomyces cerevisiae wine strain.</title>
        <authorList>
            <person name="Borneman A.R."/>
            <person name="Forgan A.H."/>
            <person name="Pretorius I.S."/>
            <person name="Chambers P.J."/>
        </authorList>
    </citation>
    <scope>NUCLEOTIDE SEQUENCE [LARGE SCALE GENOMIC DNA]</scope>
    <source>
        <strain>AWRI1631</strain>
    </source>
</reference>
<proteinExistence type="inferred from homology"/>
<sequence>MQFKNALTATAILSASALAANSSTSIPSSCSIGTSATATAQADLDKISGCSTIVGNLTITGDLGSAALASIQEIDGSLTIFNSSSLSSFSADSIKKITGDLNMQELIILTSASFGSLQEVDSINMVTLPAISTFSTDLQNANNIIVSDTTLESVEGFSTLKKVNVFNINNNRYLNSFQSSLESVSDSLQFSSNGDNTTLAFDNLVWANNITLRDVNSISFGSLQTVNASLGFINNTLPSLNLTQLSKVGQSLSIVSNDELSKAAFSNLTTVGGGFIIANNTQLKVIDGFNKVQTVGGAIEFTGNFSTLDLSSLKSVRGGAKFDSSSSNFSCNALKKLQSNGAIQGDSFVCKNGATSTSVKLSSTSTESSKSSATSSASSSGDASNAQANVSASASSSSSSSKKSKGAAPELVPATSFMGVVAAVAVALL</sequence>
<evidence type="ECO:0000250" key="1"/>
<evidence type="ECO:0000250" key="2">
    <source>
        <dbReference type="UniProtKB" id="P38248"/>
    </source>
</evidence>
<evidence type="ECO:0000255" key="3"/>
<evidence type="ECO:0000256" key="4">
    <source>
        <dbReference type="SAM" id="MobiDB-lite"/>
    </source>
</evidence>
<evidence type="ECO:0000305" key="5"/>